<keyword id="KW-0328">Glycosyltransferase</keyword>
<keyword id="KW-1185">Reference proteome</keyword>
<keyword id="KW-0808">Transferase</keyword>
<name>DEOD_BACCR</name>
<accession>Q81FV5</accession>
<feature type="chain" id="PRO_0000063117" description="Purine nucleoside phosphorylase DeoD-type">
    <location>
        <begin position="1"/>
        <end position="235"/>
    </location>
</feature>
<feature type="active site" description="Proton donor" evidence="2">
    <location>
        <position position="204"/>
    </location>
</feature>
<feature type="binding site" evidence="1">
    <location>
        <position position="4"/>
    </location>
    <ligand>
        <name>a purine D-ribonucleoside</name>
        <dbReference type="ChEBI" id="CHEBI:142355"/>
        <note>ligand shared between dimeric partners</note>
    </ligand>
</feature>
<feature type="binding site" description="in other chain" evidence="1">
    <location>
        <position position="20"/>
    </location>
    <ligand>
        <name>phosphate</name>
        <dbReference type="ChEBI" id="CHEBI:43474"/>
        <note>ligand shared between dimeric partners</note>
    </ligand>
</feature>
<feature type="binding site" description="in other chain" evidence="1">
    <location>
        <position position="24"/>
    </location>
    <ligand>
        <name>phosphate</name>
        <dbReference type="ChEBI" id="CHEBI:43474"/>
        <note>ligand shared between dimeric partners</note>
    </ligand>
</feature>
<feature type="binding site" evidence="1">
    <location>
        <position position="43"/>
    </location>
    <ligand>
        <name>phosphate</name>
        <dbReference type="ChEBI" id="CHEBI:43474"/>
        <note>ligand shared between dimeric partners</note>
    </ligand>
</feature>
<feature type="binding site" description="in other chain" evidence="1">
    <location>
        <begin position="87"/>
        <end position="90"/>
    </location>
    <ligand>
        <name>phosphate</name>
        <dbReference type="ChEBI" id="CHEBI:43474"/>
        <note>ligand shared between dimeric partners</note>
    </ligand>
</feature>
<feature type="binding site" description="in other chain" evidence="1">
    <location>
        <position position="162"/>
    </location>
    <ligand>
        <name>a purine D-ribonucleoside</name>
        <dbReference type="ChEBI" id="CHEBI:142355"/>
        <note>ligand shared between dimeric partners</note>
    </ligand>
</feature>
<feature type="binding site" description="in other chain" evidence="1">
    <location>
        <begin position="179"/>
        <end position="181"/>
    </location>
    <ligand>
        <name>a purine D-ribonucleoside</name>
        <dbReference type="ChEBI" id="CHEBI:142355"/>
        <note>ligand shared between dimeric partners</note>
    </ligand>
</feature>
<feature type="binding site" description="in other chain" evidence="1">
    <location>
        <begin position="203"/>
        <end position="204"/>
    </location>
    <ligand>
        <name>a purine D-ribonucleoside</name>
        <dbReference type="ChEBI" id="CHEBI:142355"/>
        <note>ligand shared between dimeric partners</note>
    </ligand>
</feature>
<feature type="site" description="Important for catalytic activity" evidence="2">
    <location>
        <position position="217"/>
    </location>
</feature>
<evidence type="ECO:0000250" key="1">
    <source>
        <dbReference type="UniProtKB" id="P50389"/>
    </source>
</evidence>
<evidence type="ECO:0000255" key="2">
    <source>
        <dbReference type="HAMAP-Rule" id="MF_01627"/>
    </source>
</evidence>
<comment type="function">
    <text evidence="2">Catalyzes the reversible phosphorolytic breakdown of the N-glycosidic bond in the beta-(deoxy)ribonucleoside molecules, with the formation of the corresponding free purine bases and pentose-1-phosphate.</text>
</comment>
<comment type="catalytic activity">
    <reaction evidence="2">
        <text>a purine D-ribonucleoside + phosphate = a purine nucleobase + alpha-D-ribose 1-phosphate</text>
        <dbReference type="Rhea" id="RHEA:19805"/>
        <dbReference type="ChEBI" id="CHEBI:26386"/>
        <dbReference type="ChEBI" id="CHEBI:43474"/>
        <dbReference type="ChEBI" id="CHEBI:57720"/>
        <dbReference type="ChEBI" id="CHEBI:142355"/>
        <dbReference type="EC" id="2.4.2.1"/>
    </reaction>
</comment>
<comment type="catalytic activity">
    <reaction evidence="2">
        <text>a purine 2'-deoxy-D-ribonucleoside + phosphate = a purine nucleobase + 2-deoxy-alpha-D-ribose 1-phosphate</text>
        <dbReference type="Rhea" id="RHEA:36431"/>
        <dbReference type="ChEBI" id="CHEBI:26386"/>
        <dbReference type="ChEBI" id="CHEBI:43474"/>
        <dbReference type="ChEBI" id="CHEBI:57259"/>
        <dbReference type="ChEBI" id="CHEBI:142361"/>
        <dbReference type="EC" id="2.4.2.1"/>
    </reaction>
</comment>
<comment type="subunit">
    <text evidence="2">Homohexamer; trimer of homodimers.</text>
</comment>
<comment type="similarity">
    <text evidence="2">Belongs to the PNP/UDP phosphorylase family.</text>
</comment>
<protein>
    <recommendedName>
        <fullName evidence="2">Purine nucleoside phosphorylase DeoD-type</fullName>
        <shortName evidence="2">PNP</shortName>
        <ecNumber evidence="2">2.4.2.1</ecNumber>
    </recommendedName>
</protein>
<organism>
    <name type="scientific">Bacillus cereus (strain ATCC 14579 / DSM 31 / CCUG 7414 / JCM 2152 / NBRC 15305 / NCIMB 9373 / NCTC 2599 / NRRL B-3711)</name>
    <dbReference type="NCBI Taxonomy" id="226900"/>
    <lineage>
        <taxon>Bacteria</taxon>
        <taxon>Bacillati</taxon>
        <taxon>Bacillota</taxon>
        <taxon>Bacilli</taxon>
        <taxon>Bacillales</taxon>
        <taxon>Bacillaceae</taxon>
        <taxon>Bacillus</taxon>
        <taxon>Bacillus cereus group</taxon>
    </lineage>
</organism>
<sequence>MSVHIEAKQGEIAESILLPGDPLRAKYIAETFLEDVTCYNNVRGMLGFTGTYKGKRVSVQGTGMGVPSISIYVNELIQSYGVKNLIRVGTCGAIQKDVKVRDVIIAMTACTDSNMNRLTFPGFDFAPAANFDLLKKAYDAGTEKGLHVRVGNVLTADVFYRESMDIVKKLGDYGVLAVEMETTALYTLAAKYGVNALSVLTVSDHIFTGEETTSEERQTTFNEMIEIALDAAIQQ</sequence>
<proteinExistence type="inferred from homology"/>
<gene>
    <name evidence="2" type="primary">deoD</name>
    <name type="ordered locus">BC_1463</name>
</gene>
<reference key="1">
    <citation type="journal article" date="2003" name="Nature">
        <title>Genome sequence of Bacillus cereus and comparative analysis with Bacillus anthracis.</title>
        <authorList>
            <person name="Ivanova N."/>
            <person name="Sorokin A."/>
            <person name="Anderson I."/>
            <person name="Galleron N."/>
            <person name="Candelon B."/>
            <person name="Kapatral V."/>
            <person name="Bhattacharyya A."/>
            <person name="Reznik G."/>
            <person name="Mikhailova N."/>
            <person name="Lapidus A."/>
            <person name="Chu L."/>
            <person name="Mazur M."/>
            <person name="Goltsman E."/>
            <person name="Larsen N."/>
            <person name="D'Souza M."/>
            <person name="Walunas T."/>
            <person name="Grechkin Y."/>
            <person name="Pusch G."/>
            <person name="Haselkorn R."/>
            <person name="Fonstein M."/>
            <person name="Ehrlich S.D."/>
            <person name="Overbeek R."/>
            <person name="Kyrpides N.C."/>
        </authorList>
    </citation>
    <scope>NUCLEOTIDE SEQUENCE [LARGE SCALE GENOMIC DNA]</scope>
    <source>
        <strain>ATCC 14579 / DSM 31 / CCUG 7414 / JCM 2152 / NBRC 15305 / NCIMB 9373 / NCTC 2599 / NRRL B-3711</strain>
    </source>
</reference>
<dbReference type="EC" id="2.4.2.1" evidence="2"/>
<dbReference type="EMBL" id="AE016877">
    <property type="protein sequence ID" value="AAP08443.1"/>
    <property type="molecule type" value="Genomic_DNA"/>
</dbReference>
<dbReference type="RefSeq" id="NP_831242.1">
    <property type="nucleotide sequence ID" value="NC_004722.1"/>
</dbReference>
<dbReference type="RefSeq" id="WP_000110703.1">
    <property type="nucleotide sequence ID" value="NZ_CP138336.1"/>
</dbReference>
<dbReference type="SMR" id="Q81FV5"/>
<dbReference type="STRING" id="226900.BC_1463"/>
<dbReference type="KEGG" id="bce:BC1463"/>
<dbReference type="PATRIC" id="fig|226900.8.peg.1440"/>
<dbReference type="HOGENOM" id="CLU_068457_2_0_9"/>
<dbReference type="OrthoDB" id="9782889at2"/>
<dbReference type="Proteomes" id="UP000001417">
    <property type="component" value="Chromosome"/>
</dbReference>
<dbReference type="GO" id="GO:0005829">
    <property type="term" value="C:cytosol"/>
    <property type="evidence" value="ECO:0000318"/>
    <property type="project" value="GO_Central"/>
</dbReference>
<dbReference type="GO" id="GO:0004731">
    <property type="term" value="F:purine-nucleoside phosphorylase activity"/>
    <property type="evidence" value="ECO:0000318"/>
    <property type="project" value="GO_Central"/>
</dbReference>
<dbReference type="GO" id="GO:0006152">
    <property type="term" value="P:purine nucleoside catabolic process"/>
    <property type="evidence" value="ECO:0000318"/>
    <property type="project" value="GO_Central"/>
</dbReference>
<dbReference type="CDD" id="cd09006">
    <property type="entry name" value="PNP_EcPNPI-like"/>
    <property type="match status" value="1"/>
</dbReference>
<dbReference type="Gene3D" id="3.40.50.1580">
    <property type="entry name" value="Nucleoside phosphorylase domain"/>
    <property type="match status" value="1"/>
</dbReference>
<dbReference type="HAMAP" id="MF_01627">
    <property type="entry name" value="Pur_nucleosid_phosp"/>
    <property type="match status" value="1"/>
</dbReference>
<dbReference type="InterPro" id="IPR004402">
    <property type="entry name" value="DeoD-type"/>
</dbReference>
<dbReference type="InterPro" id="IPR018016">
    <property type="entry name" value="Nucleoside_phosphorylase_CS"/>
</dbReference>
<dbReference type="InterPro" id="IPR000845">
    <property type="entry name" value="Nucleoside_phosphorylase_d"/>
</dbReference>
<dbReference type="InterPro" id="IPR035994">
    <property type="entry name" value="Nucleoside_phosphorylase_sf"/>
</dbReference>
<dbReference type="NCBIfam" id="TIGR00107">
    <property type="entry name" value="deoD"/>
    <property type="match status" value="1"/>
</dbReference>
<dbReference type="NCBIfam" id="NF004489">
    <property type="entry name" value="PRK05819.1"/>
    <property type="match status" value="1"/>
</dbReference>
<dbReference type="NCBIfam" id="NF009914">
    <property type="entry name" value="PRK13374.1"/>
    <property type="match status" value="1"/>
</dbReference>
<dbReference type="PANTHER" id="PTHR43691:SF11">
    <property type="entry name" value="FI09636P-RELATED"/>
    <property type="match status" value="1"/>
</dbReference>
<dbReference type="PANTHER" id="PTHR43691">
    <property type="entry name" value="URIDINE PHOSPHORYLASE"/>
    <property type="match status" value="1"/>
</dbReference>
<dbReference type="Pfam" id="PF01048">
    <property type="entry name" value="PNP_UDP_1"/>
    <property type="match status" value="1"/>
</dbReference>
<dbReference type="SUPFAM" id="SSF53167">
    <property type="entry name" value="Purine and uridine phosphorylases"/>
    <property type="match status" value="1"/>
</dbReference>
<dbReference type="PROSITE" id="PS01232">
    <property type="entry name" value="PNP_UDP_1"/>
    <property type="match status" value="1"/>
</dbReference>